<accession>Q9BSV6</accession>
<accession>A6NNB1</accession>
<accession>B0V3J1</accession>
<accession>Q9BVT1</accession>
<accession>Q9H6H5</accession>
<organism>
    <name type="scientific">Homo sapiens</name>
    <name type="common">Human</name>
    <dbReference type="NCBI Taxonomy" id="9606"/>
    <lineage>
        <taxon>Eukaryota</taxon>
        <taxon>Metazoa</taxon>
        <taxon>Chordata</taxon>
        <taxon>Craniata</taxon>
        <taxon>Vertebrata</taxon>
        <taxon>Euteleostomi</taxon>
        <taxon>Mammalia</taxon>
        <taxon>Eutheria</taxon>
        <taxon>Euarchontoglires</taxon>
        <taxon>Primates</taxon>
        <taxon>Haplorrhini</taxon>
        <taxon>Catarrhini</taxon>
        <taxon>Hominidae</taxon>
        <taxon>Homo</taxon>
    </lineage>
</organism>
<feature type="chain" id="PRO_0000109463" description="tRNA-splicing endonuclease subunit Sen34">
    <location>
        <begin position="1"/>
        <end position="310"/>
    </location>
</feature>
<feature type="region of interest" description="Disordered" evidence="2">
    <location>
        <begin position="119"/>
        <end position="177"/>
    </location>
</feature>
<feature type="compositionally biased region" description="Low complexity" evidence="2">
    <location>
        <begin position="128"/>
        <end position="144"/>
    </location>
</feature>
<feature type="active site" evidence="1">
    <location>
        <position position="247"/>
    </location>
</feature>
<feature type="active site" evidence="1">
    <location>
        <position position="255"/>
    </location>
</feature>
<feature type="active site" evidence="1">
    <location>
        <position position="286"/>
    </location>
</feature>
<feature type="sequence variant" id="VAR_054811" description="In PCH2C; dbSNP:rs113994150." evidence="6">
    <original>R</original>
    <variation>W</variation>
    <location>
        <position position="58"/>
    </location>
</feature>
<feature type="sequence variant" id="VAR_061149" description="In dbSNP:rs17849378." evidence="4">
    <original>L</original>
    <variation>V</variation>
    <location>
        <position position="112"/>
    </location>
</feature>
<feature type="strand" evidence="10">
    <location>
        <begin position="4"/>
        <end position="7"/>
    </location>
</feature>
<feature type="strand" evidence="10">
    <location>
        <begin position="10"/>
        <end position="13"/>
    </location>
</feature>
<feature type="helix" evidence="10">
    <location>
        <begin position="16"/>
        <end position="26"/>
    </location>
</feature>
<feature type="strand" evidence="9">
    <location>
        <begin position="37"/>
        <end position="39"/>
    </location>
</feature>
<feature type="strand" evidence="10">
    <location>
        <begin position="43"/>
        <end position="45"/>
    </location>
</feature>
<feature type="strand" evidence="10">
    <location>
        <begin position="50"/>
        <end position="52"/>
    </location>
</feature>
<feature type="helix" evidence="10">
    <location>
        <begin position="54"/>
        <end position="62"/>
    </location>
</feature>
<feature type="strand" evidence="10">
    <location>
        <begin position="68"/>
        <end position="70"/>
    </location>
</feature>
<feature type="strand" evidence="10">
    <location>
        <begin position="76"/>
        <end position="78"/>
    </location>
</feature>
<feature type="helix" evidence="10">
    <location>
        <begin position="80"/>
        <end position="95"/>
    </location>
</feature>
<feature type="helix" evidence="10">
    <location>
        <begin position="97"/>
        <end position="110"/>
    </location>
</feature>
<feature type="helix" evidence="10">
    <location>
        <begin position="113"/>
        <end position="131"/>
    </location>
</feature>
<feature type="strand" evidence="10">
    <location>
        <begin position="182"/>
        <end position="187"/>
    </location>
</feature>
<feature type="strand" evidence="10">
    <location>
        <begin position="195"/>
        <end position="197"/>
    </location>
</feature>
<feature type="turn" evidence="10">
    <location>
        <begin position="210"/>
        <end position="213"/>
    </location>
</feature>
<feature type="helix" evidence="8">
    <location>
        <begin position="217"/>
        <end position="229"/>
    </location>
</feature>
<feature type="strand" evidence="8">
    <location>
        <begin position="233"/>
        <end position="235"/>
    </location>
</feature>
<feature type="helix" evidence="8">
    <location>
        <begin position="238"/>
        <end position="240"/>
    </location>
</feature>
<feature type="strand" evidence="8">
    <location>
        <begin position="244"/>
        <end position="247"/>
    </location>
</feature>
<feature type="strand" evidence="8">
    <location>
        <begin position="251"/>
        <end position="255"/>
    </location>
</feature>
<feature type="strand" evidence="8">
    <location>
        <begin position="257"/>
        <end position="262"/>
    </location>
</feature>
<feature type="strand" evidence="8">
    <location>
        <begin position="267"/>
        <end position="270"/>
    </location>
</feature>
<feature type="helix" evidence="8">
    <location>
        <begin position="275"/>
        <end position="279"/>
    </location>
</feature>
<feature type="strand" evidence="8">
    <location>
        <begin position="284"/>
        <end position="293"/>
    </location>
</feature>
<feature type="turn" evidence="11">
    <location>
        <begin position="295"/>
        <end position="297"/>
    </location>
</feature>
<feature type="strand" evidence="8">
    <location>
        <begin position="299"/>
        <end position="306"/>
    </location>
</feature>
<proteinExistence type="evidence at protein level"/>
<gene>
    <name type="primary">TSEN34</name>
    <name type="synonym">LENG5</name>
    <name type="synonym">SEN34</name>
</gene>
<name>SEN34_HUMAN</name>
<keyword id="KW-0002">3D-structure</keyword>
<keyword id="KW-0225">Disease variant</keyword>
<keyword id="KW-0456">Lyase</keyword>
<keyword id="KW-0507">mRNA processing</keyword>
<keyword id="KW-0523">Neurodegeneration</keyword>
<keyword id="KW-0539">Nucleus</keyword>
<keyword id="KW-1021">Pontocerebellar hypoplasia</keyword>
<keyword id="KW-1267">Proteomics identification</keyword>
<keyword id="KW-1185">Reference proteome</keyword>
<keyword id="KW-0819">tRNA processing</keyword>
<reference key="1">
    <citation type="journal article" date="2004" name="Cell">
        <title>Identification of a human endonuclease complex reveals a link between tRNA splicing and pre-mRNA 3' end formation.</title>
        <authorList>
            <person name="Paushkin S.V."/>
            <person name="Patel M."/>
            <person name="Furia B.S."/>
            <person name="Peltz S.W."/>
            <person name="Trotta C.R."/>
        </authorList>
    </citation>
    <scope>NUCLEOTIDE SEQUENCE [MRNA]</scope>
    <scope>FUNCTION</scope>
    <scope>SUBCELLULAR LOCATION</scope>
    <scope>COMPONENT OF A COMPLEX WITH SEN2; SEN15; SEN54 AND CLP1</scope>
</reference>
<reference key="2">
    <citation type="journal article" date="2004" name="Nat. Genet.">
        <title>Complete sequencing and characterization of 21,243 full-length human cDNAs.</title>
        <authorList>
            <person name="Ota T."/>
            <person name="Suzuki Y."/>
            <person name="Nishikawa T."/>
            <person name="Otsuki T."/>
            <person name="Sugiyama T."/>
            <person name="Irie R."/>
            <person name="Wakamatsu A."/>
            <person name="Hayashi K."/>
            <person name="Sato H."/>
            <person name="Nagai K."/>
            <person name="Kimura K."/>
            <person name="Makita H."/>
            <person name="Sekine M."/>
            <person name="Obayashi M."/>
            <person name="Nishi T."/>
            <person name="Shibahara T."/>
            <person name="Tanaka T."/>
            <person name="Ishii S."/>
            <person name="Yamamoto J."/>
            <person name="Saito K."/>
            <person name="Kawai Y."/>
            <person name="Isono Y."/>
            <person name="Nakamura Y."/>
            <person name="Nagahari K."/>
            <person name="Murakami K."/>
            <person name="Yasuda T."/>
            <person name="Iwayanagi T."/>
            <person name="Wagatsuma M."/>
            <person name="Shiratori A."/>
            <person name="Sudo H."/>
            <person name="Hosoiri T."/>
            <person name="Kaku Y."/>
            <person name="Kodaira H."/>
            <person name="Kondo H."/>
            <person name="Sugawara M."/>
            <person name="Takahashi M."/>
            <person name="Kanda K."/>
            <person name="Yokoi T."/>
            <person name="Furuya T."/>
            <person name="Kikkawa E."/>
            <person name="Omura Y."/>
            <person name="Abe K."/>
            <person name="Kamihara K."/>
            <person name="Katsuta N."/>
            <person name="Sato K."/>
            <person name="Tanikawa M."/>
            <person name="Yamazaki M."/>
            <person name="Ninomiya K."/>
            <person name="Ishibashi T."/>
            <person name="Yamashita H."/>
            <person name="Murakawa K."/>
            <person name="Fujimori K."/>
            <person name="Tanai H."/>
            <person name="Kimata M."/>
            <person name="Watanabe M."/>
            <person name="Hiraoka S."/>
            <person name="Chiba Y."/>
            <person name="Ishida S."/>
            <person name="Ono Y."/>
            <person name="Takiguchi S."/>
            <person name="Watanabe S."/>
            <person name="Yosida M."/>
            <person name="Hotuta T."/>
            <person name="Kusano J."/>
            <person name="Kanehori K."/>
            <person name="Takahashi-Fujii A."/>
            <person name="Hara H."/>
            <person name="Tanase T.-O."/>
            <person name="Nomura Y."/>
            <person name="Togiya S."/>
            <person name="Komai F."/>
            <person name="Hara R."/>
            <person name="Takeuchi K."/>
            <person name="Arita M."/>
            <person name="Imose N."/>
            <person name="Musashino K."/>
            <person name="Yuuki H."/>
            <person name="Oshima A."/>
            <person name="Sasaki N."/>
            <person name="Aotsuka S."/>
            <person name="Yoshikawa Y."/>
            <person name="Matsunawa H."/>
            <person name="Ichihara T."/>
            <person name="Shiohata N."/>
            <person name="Sano S."/>
            <person name="Moriya S."/>
            <person name="Momiyama H."/>
            <person name="Satoh N."/>
            <person name="Takami S."/>
            <person name="Terashima Y."/>
            <person name="Suzuki O."/>
            <person name="Nakagawa S."/>
            <person name="Senoh A."/>
            <person name="Mizoguchi H."/>
            <person name="Goto Y."/>
            <person name="Shimizu F."/>
            <person name="Wakebe H."/>
            <person name="Hishigaki H."/>
            <person name="Watanabe T."/>
            <person name="Sugiyama A."/>
            <person name="Takemoto M."/>
            <person name="Kawakami B."/>
            <person name="Yamazaki M."/>
            <person name="Watanabe K."/>
            <person name="Kumagai A."/>
            <person name="Itakura S."/>
            <person name="Fukuzumi Y."/>
            <person name="Fujimori Y."/>
            <person name="Komiyama M."/>
            <person name="Tashiro H."/>
            <person name="Tanigami A."/>
            <person name="Fujiwara T."/>
            <person name="Ono T."/>
            <person name="Yamada K."/>
            <person name="Fujii Y."/>
            <person name="Ozaki K."/>
            <person name="Hirao M."/>
            <person name="Ohmori Y."/>
            <person name="Kawabata A."/>
            <person name="Hikiji T."/>
            <person name="Kobatake N."/>
            <person name="Inagaki H."/>
            <person name="Ikema Y."/>
            <person name="Okamoto S."/>
            <person name="Okitani R."/>
            <person name="Kawakami T."/>
            <person name="Noguchi S."/>
            <person name="Itoh T."/>
            <person name="Shigeta K."/>
            <person name="Senba T."/>
            <person name="Matsumura K."/>
            <person name="Nakajima Y."/>
            <person name="Mizuno T."/>
            <person name="Morinaga M."/>
            <person name="Sasaki M."/>
            <person name="Togashi T."/>
            <person name="Oyama M."/>
            <person name="Hata H."/>
            <person name="Watanabe M."/>
            <person name="Komatsu T."/>
            <person name="Mizushima-Sugano J."/>
            <person name="Satoh T."/>
            <person name="Shirai Y."/>
            <person name="Takahashi Y."/>
            <person name="Nakagawa K."/>
            <person name="Okumura K."/>
            <person name="Nagase T."/>
            <person name="Nomura N."/>
            <person name="Kikuchi H."/>
            <person name="Masuho Y."/>
            <person name="Yamashita R."/>
            <person name="Nakai K."/>
            <person name="Yada T."/>
            <person name="Nakamura Y."/>
            <person name="Ohara O."/>
            <person name="Isogai T."/>
            <person name="Sugano S."/>
        </authorList>
    </citation>
    <scope>NUCLEOTIDE SEQUENCE [LARGE SCALE MRNA]</scope>
    <scope>VARIANT VAL-112</scope>
    <source>
        <tissue>Kidney epithelium</tissue>
    </source>
</reference>
<reference key="3">
    <citation type="journal article" date="2004" name="Nature">
        <title>The DNA sequence and biology of human chromosome 19.</title>
        <authorList>
            <person name="Grimwood J."/>
            <person name="Gordon L.A."/>
            <person name="Olsen A.S."/>
            <person name="Terry A."/>
            <person name="Schmutz J."/>
            <person name="Lamerdin J.E."/>
            <person name="Hellsten U."/>
            <person name="Goodstein D."/>
            <person name="Couronne O."/>
            <person name="Tran-Gyamfi M."/>
            <person name="Aerts A."/>
            <person name="Altherr M."/>
            <person name="Ashworth L."/>
            <person name="Bajorek E."/>
            <person name="Black S."/>
            <person name="Branscomb E."/>
            <person name="Caenepeel S."/>
            <person name="Carrano A.V."/>
            <person name="Caoile C."/>
            <person name="Chan Y.M."/>
            <person name="Christensen M."/>
            <person name="Cleland C.A."/>
            <person name="Copeland A."/>
            <person name="Dalin E."/>
            <person name="Dehal P."/>
            <person name="Denys M."/>
            <person name="Detter J.C."/>
            <person name="Escobar J."/>
            <person name="Flowers D."/>
            <person name="Fotopulos D."/>
            <person name="Garcia C."/>
            <person name="Georgescu A.M."/>
            <person name="Glavina T."/>
            <person name="Gomez M."/>
            <person name="Gonzales E."/>
            <person name="Groza M."/>
            <person name="Hammon N."/>
            <person name="Hawkins T."/>
            <person name="Haydu L."/>
            <person name="Ho I."/>
            <person name="Huang W."/>
            <person name="Israni S."/>
            <person name="Jett J."/>
            <person name="Kadner K."/>
            <person name="Kimball H."/>
            <person name="Kobayashi A."/>
            <person name="Larionov V."/>
            <person name="Leem S.-H."/>
            <person name="Lopez F."/>
            <person name="Lou Y."/>
            <person name="Lowry S."/>
            <person name="Malfatti S."/>
            <person name="Martinez D."/>
            <person name="McCready P.M."/>
            <person name="Medina C."/>
            <person name="Morgan J."/>
            <person name="Nelson K."/>
            <person name="Nolan M."/>
            <person name="Ovcharenko I."/>
            <person name="Pitluck S."/>
            <person name="Pollard M."/>
            <person name="Popkie A.P."/>
            <person name="Predki P."/>
            <person name="Quan G."/>
            <person name="Ramirez L."/>
            <person name="Rash S."/>
            <person name="Retterer J."/>
            <person name="Rodriguez A."/>
            <person name="Rogers S."/>
            <person name="Salamov A."/>
            <person name="Salazar A."/>
            <person name="She X."/>
            <person name="Smith D."/>
            <person name="Slezak T."/>
            <person name="Solovyev V."/>
            <person name="Thayer N."/>
            <person name="Tice H."/>
            <person name="Tsai M."/>
            <person name="Ustaszewska A."/>
            <person name="Vo N."/>
            <person name="Wagner M."/>
            <person name="Wheeler J."/>
            <person name="Wu K."/>
            <person name="Xie G."/>
            <person name="Yang J."/>
            <person name="Dubchak I."/>
            <person name="Furey T.S."/>
            <person name="DeJong P."/>
            <person name="Dickson M."/>
            <person name="Gordon D."/>
            <person name="Eichler E.E."/>
            <person name="Pennacchio L.A."/>
            <person name="Richardson P."/>
            <person name="Stubbs L."/>
            <person name="Rokhsar D.S."/>
            <person name="Myers R.M."/>
            <person name="Rubin E.M."/>
            <person name="Lucas S.M."/>
        </authorList>
    </citation>
    <scope>NUCLEOTIDE SEQUENCE [LARGE SCALE GENOMIC DNA]</scope>
</reference>
<reference key="4">
    <citation type="submission" date="2005-07" db="EMBL/GenBank/DDBJ databases">
        <authorList>
            <person name="Mural R.J."/>
            <person name="Istrail S."/>
            <person name="Sutton G.G."/>
            <person name="Florea L."/>
            <person name="Halpern A.L."/>
            <person name="Mobarry C.M."/>
            <person name="Lippert R."/>
            <person name="Walenz B."/>
            <person name="Shatkay H."/>
            <person name="Dew I."/>
            <person name="Miller J.R."/>
            <person name="Flanigan M.J."/>
            <person name="Edwards N.J."/>
            <person name="Bolanos R."/>
            <person name="Fasulo D."/>
            <person name="Halldorsson B.V."/>
            <person name="Hannenhalli S."/>
            <person name="Turner R."/>
            <person name="Yooseph S."/>
            <person name="Lu F."/>
            <person name="Nusskern D.R."/>
            <person name="Shue B.C."/>
            <person name="Zheng X.H."/>
            <person name="Zhong F."/>
            <person name="Delcher A.L."/>
            <person name="Huson D.H."/>
            <person name="Kravitz S.A."/>
            <person name="Mouchard L."/>
            <person name="Reinert K."/>
            <person name="Remington K.A."/>
            <person name="Clark A.G."/>
            <person name="Waterman M.S."/>
            <person name="Eichler E.E."/>
            <person name="Adams M.D."/>
            <person name="Hunkapiller M.W."/>
            <person name="Myers E.W."/>
            <person name="Venter J.C."/>
        </authorList>
    </citation>
    <scope>NUCLEOTIDE SEQUENCE [LARGE SCALE GENOMIC DNA]</scope>
</reference>
<reference key="5">
    <citation type="journal article" date="2004" name="Genome Res.">
        <title>The status, quality, and expansion of the NIH full-length cDNA project: the Mammalian Gene Collection (MGC).</title>
        <authorList>
            <consortium name="The MGC Project Team"/>
        </authorList>
    </citation>
    <scope>NUCLEOTIDE SEQUENCE [LARGE SCALE MRNA]</scope>
    <source>
        <tissue>Brain</tissue>
        <tissue>Eye</tissue>
    </source>
</reference>
<reference key="6">
    <citation type="journal article" date="2000" name="Immunogenetics">
        <title>Extensive gene duplications and a large inversion characterize the human leukocyte receptor cluster.</title>
        <authorList>
            <person name="Wende H."/>
            <person name="Volz A."/>
            <person name="Ziegler A."/>
        </authorList>
    </citation>
    <scope>IDENTIFICATION IN THE LRC</scope>
</reference>
<reference key="7">
    <citation type="journal article" date="2001" name="Immunogenetics">
        <authorList>
            <person name="Wende H."/>
            <person name="Volz A."/>
            <person name="Ziegler A."/>
        </authorList>
    </citation>
    <scope>ERRATUM OF PUBMED:10941842</scope>
</reference>
<reference key="8">
    <citation type="journal article" date="2009" name="Anal. Chem.">
        <title>Lys-N and trypsin cover complementary parts of the phosphoproteome in a refined SCX-based approach.</title>
        <authorList>
            <person name="Gauci S."/>
            <person name="Helbig A.O."/>
            <person name="Slijper M."/>
            <person name="Krijgsveld J."/>
            <person name="Heck A.J."/>
            <person name="Mohammed S."/>
        </authorList>
    </citation>
    <scope>IDENTIFICATION BY MASS SPECTROMETRY [LARGE SCALE ANALYSIS]</scope>
</reference>
<reference key="9">
    <citation type="journal article" date="2011" name="BMC Syst. Biol.">
        <title>Initial characterization of the human central proteome.</title>
        <authorList>
            <person name="Burkard T.R."/>
            <person name="Planyavsky M."/>
            <person name="Kaupe I."/>
            <person name="Breitwieser F.P."/>
            <person name="Buerckstuemmer T."/>
            <person name="Bennett K.L."/>
            <person name="Superti-Furga G."/>
            <person name="Colinge J."/>
        </authorList>
    </citation>
    <scope>IDENTIFICATION BY MASS SPECTROMETRY [LARGE SCALE ANALYSIS]</scope>
</reference>
<reference key="10">
    <citation type="journal article" date="2012" name="Proc. Natl. Acad. Sci. U.S.A.">
        <title>N-terminal acetylome analyses and functional insights of the N-terminal acetyltransferase NatB.</title>
        <authorList>
            <person name="Van Damme P."/>
            <person name="Lasa M."/>
            <person name="Polevoda B."/>
            <person name="Gazquez C."/>
            <person name="Elosegui-Artola A."/>
            <person name="Kim D.S."/>
            <person name="De Juan-Pardo E."/>
            <person name="Demeyer K."/>
            <person name="Hole K."/>
            <person name="Larrea E."/>
            <person name="Timmerman E."/>
            <person name="Prieto J."/>
            <person name="Arnesen T."/>
            <person name="Sherman F."/>
            <person name="Gevaert K."/>
            <person name="Aldabe R."/>
        </authorList>
    </citation>
    <scope>IDENTIFICATION BY MASS SPECTROMETRY [LARGE SCALE ANALYSIS]</scope>
</reference>
<reference key="11">
    <citation type="journal article" date="2008" name="Nat. Genet.">
        <title>tRNA splicing endonuclease mutations cause pontocerebellar hypoplasia.</title>
        <authorList>
            <person name="Budde B.S."/>
            <person name="Namavar Y."/>
            <person name="Barth P.G."/>
            <person name="Poll-The B.T."/>
            <person name="Nuernberg G."/>
            <person name="Becker C."/>
            <person name="van Ruissen F."/>
            <person name="Weterman M.A.J."/>
            <person name="Fluiter K."/>
            <person name="te Beek E.T."/>
            <person name="Aronica E."/>
            <person name="van der Knaap M.S."/>
            <person name="Hoehne W."/>
            <person name="Toliat M.R."/>
            <person name="Crow Y.J."/>
            <person name="Steinling M."/>
            <person name="Voit T."/>
            <person name="Roelenso F."/>
            <person name="Brussel W."/>
            <person name="Brockmann K."/>
            <person name="Kyllerman M."/>
            <person name="Boltshauser E."/>
            <person name="Hammersen G."/>
            <person name="Willemsen M."/>
            <person name="Basel-Vanagaite L."/>
            <person name="Kraegeloh-Mann I."/>
            <person name="de Vries L.S."/>
            <person name="Sztriha L."/>
            <person name="Muntoni F."/>
            <person name="Ferrie C.D."/>
            <person name="Battini R."/>
            <person name="Hennekam R.C.M."/>
            <person name="Grillo E."/>
            <person name="Beemer F.A."/>
            <person name="Stoets L.M.E."/>
            <person name="Wollnik B."/>
            <person name="Nuernberg P."/>
            <person name="Baas F."/>
        </authorList>
    </citation>
    <scope>VARIANT PCH2C TRP-58</scope>
</reference>
<sequence>MLVVEVANGRSLVWGAEAVQALRERLGVGGRTVGALPRGPRQNSRLGLPLLLMPEEARLLAEIGAVTLVSAPRPDSRHHSLALTSFKRQQEESFQEQSALAAEARETRRQELLEKITEGQAAKKQKLEQASGASSSQEAGSSQAAKEDETSDGQASGEQEEAGPSSSQAGPSNGVAPLPRSALLVQLATARPRPVKARPLDWRVQSKDWPHAGRPAHELRYSIYRDLWERGFFLSAAGKFGGDFLVYPGDPLRFHAHYIAQCWAPEDTIPLQDLVAAGRLGTSVRKTLLLCSPQPDGKVVYTSLQWASLQ</sequence>
<evidence type="ECO:0000250" key="1"/>
<evidence type="ECO:0000256" key="2">
    <source>
        <dbReference type="SAM" id="MobiDB-lite"/>
    </source>
</evidence>
<evidence type="ECO:0000269" key="3">
    <source>
    </source>
</evidence>
<evidence type="ECO:0000269" key="4">
    <source>
    </source>
</evidence>
<evidence type="ECO:0000269" key="5">
    <source>
    </source>
</evidence>
<evidence type="ECO:0000269" key="6">
    <source>
    </source>
</evidence>
<evidence type="ECO:0000305" key="7"/>
<evidence type="ECO:0007829" key="8">
    <source>
        <dbReference type="PDB" id="6Z9U"/>
    </source>
</evidence>
<evidence type="ECO:0007829" key="9">
    <source>
        <dbReference type="PDB" id="7UXA"/>
    </source>
</evidence>
<evidence type="ECO:0007829" key="10">
    <source>
        <dbReference type="PDB" id="8HMZ"/>
    </source>
</evidence>
<evidence type="ECO:0007829" key="11">
    <source>
        <dbReference type="PDB" id="8ISS"/>
    </source>
</evidence>
<comment type="function">
    <text evidence="5">Constitutes one of the two catalytic subunit of the tRNA-splicing endonuclease complex, a complex responsible for identification and cleavage of the splice sites in pre-tRNA. It cleaves pre-tRNA at the 5'- and 3'-splice sites to release the intron. The products are an intron and two tRNA half-molecules bearing 2',3'-cyclic phosphate and 5'-OH termini. There are no conserved sequences at the splice sites, but the intron is invariably located at the same site in the gene, placing the splice sites an invariant distance from the constant structural features of the tRNA body. It probably carries the active site for 3'-splice site cleavage. The tRNA splicing endonuclease is also involved in mRNA processing via its association with pre-mRNA 3'-end processing factors, establishing a link between pre-tRNA splicing and pre-mRNA 3'-end formation, suggesting that the endonuclease subunits function in multiple RNA-processing events.</text>
</comment>
<comment type="catalytic activity">
    <reaction>
        <text>pretRNA = a 3'-half-tRNA molecule with a 5'-OH end + a 5'-half-tRNA molecule with a 2',3'-cyclic phosphate end + an intron with a 2',3'-cyclic phosphate and a 5'-hydroxyl terminus.</text>
        <dbReference type="EC" id="4.6.1.16"/>
    </reaction>
</comment>
<comment type="subunit">
    <text evidence="3">tRNA splicing endonuclease is a heterotetramer composed of TSEN2, TSEN15, TSEN34/LENG5 and TSEN54. tRNA splicing endonuclease complex also contains proteins of the pre-mRNA 3'-end processing machinery such as CLP1, CPSF1, CPSF4 and CSTF2.</text>
</comment>
<comment type="subcellular location">
    <subcellularLocation>
        <location evidence="5">Nucleus</location>
    </subcellularLocation>
    <subcellularLocation>
        <location evidence="5">Nucleus</location>
        <location evidence="5">Nucleolus</location>
    </subcellularLocation>
    <text>May be transiently localized in the nucleolus.</text>
</comment>
<comment type="disease" evidence="6">
    <disease id="DI-02178">
        <name>Pontocerebellar hypoplasia 2C</name>
        <acronym>PCH2C</acronym>
        <description>A disorder characterized by an abnormally small cerebellum and brainstem, and progressive microcephaly from birth combined with extrapyramidal dyskinesia. Severe chorea occurs and epilepsy is frequent. There are no signs of spinal cord anterior horn cells degeneration.</description>
        <dbReference type="MIM" id="612390"/>
    </disease>
    <text>The disease is caused by variants affecting the gene represented in this entry.</text>
</comment>
<comment type="miscellaneous">
    <text>Belongs to the leukocyte receptor cluster (LRC) present on 19q13.4.</text>
</comment>
<comment type="similarity">
    <text evidence="7">Belongs to the tRNA-intron endonuclease family.</text>
</comment>
<comment type="sequence caution" evidence="7">
    <conflict type="erroneous termination">
        <sequence resource="EMBL-CDS" id="BAB15284"/>
    </conflict>
    <text>Extended C-terminus.</text>
</comment>
<protein>
    <recommendedName>
        <fullName>tRNA-splicing endonuclease subunit Sen34</fullName>
        <ecNumber>4.6.1.16</ecNumber>
    </recommendedName>
    <alternativeName>
        <fullName>Leukocyte receptor cluster member 5</fullName>
    </alternativeName>
    <alternativeName>
        <fullName>tRNA-intron endonuclease Sen34</fullName>
        <shortName>HsSen34</shortName>
    </alternativeName>
</protein>
<dbReference type="EC" id="4.6.1.16"/>
<dbReference type="EMBL" id="AK025929">
    <property type="protein sequence ID" value="BAB15284.1"/>
    <property type="status" value="ALT_SEQ"/>
    <property type="molecule type" value="mRNA"/>
</dbReference>
<dbReference type="EMBL" id="CU457734">
    <property type="status" value="NOT_ANNOTATED_CDS"/>
    <property type="molecule type" value="Genomic_DNA"/>
</dbReference>
<dbReference type="EMBL" id="CU151838">
    <property type="status" value="NOT_ANNOTATED_CDS"/>
    <property type="molecule type" value="Genomic_DNA"/>
</dbReference>
<dbReference type="EMBL" id="CH471135">
    <property type="protein sequence ID" value="EAW72203.1"/>
    <property type="molecule type" value="Genomic_DNA"/>
</dbReference>
<dbReference type="EMBL" id="BC004530">
    <property type="protein sequence ID" value="AAH04530.1"/>
    <property type="molecule type" value="mRNA"/>
</dbReference>
<dbReference type="EMBL" id="BC020805">
    <property type="protein sequence ID" value="AAH20805.1"/>
    <property type="molecule type" value="mRNA"/>
</dbReference>
<dbReference type="CCDS" id="CCDS42609.1"/>
<dbReference type="RefSeq" id="NP_001070914.1">
    <property type="nucleotide sequence ID" value="NM_001077446.4"/>
</dbReference>
<dbReference type="RefSeq" id="NP_001269261.1">
    <property type="nucleotide sequence ID" value="NM_001282332.2"/>
</dbReference>
<dbReference type="RefSeq" id="NP_001373669.1">
    <property type="nucleotide sequence ID" value="NM_001386740.1"/>
</dbReference>
<dbReference type="RefSeq" id="NP_076980.2">
    <property type="nucleotide sequence ID" value="NM_024075.5"/>
</dbReference>
<dbReference type="RefSeq" id="XP_011525596.1">
    <property type="nucleotide sequence ID" value="XM_011527294.4"/>
</dbReference>
<dbReference type="RefSeq" id="XP_011525597.1">
    <property type="nucleotide sequence ID" value="XM_011527295.1"/>
</dbReference>
<dbReference type="RefSeq" id="XP_047295347.1">
    <property type="nucleotide sequence ID" value="XM_047439391.1"/>
</dbReference>
<dbReference type="RefSeq" id="XP_054178041.1">
    <property type="nucleotide sequence ID" value="XM_054322066.1"/>
</dbReference>
<dbReference type="RefSeq" id="XP_054178042.1">
    <property type="nucleotide sequence ID" value="XM_054322067.1"/>
</dbReference>
<dbReference type="RefSeq" id="XP_054185675.1">
    <property type="nucleotide sequence ID" value="XM_054329700.1"/>
</dbReference>
<dbReference type="RefSeq" id="XP_054185676.1">
    <property type="nucleotide sequence ID" value="XM_054329701.1"/>
</dbReference>
<dbReference type="RefSeq" id="XP_054186177.1">
    <property type="nucleotide sequence ID" value="XM_054330202.1"/>
</dbReference>
<dbReference type="RefSeq" id="XP_054186178.1">
    <property type="nucleotide sequence ID" value="XM_054330203.1"/>
</dbReference>
<dbReference type="RefSeq" id="XP_054186473.1">
    <property type="nucleotide sequence ID" value="XM_054330498.1"/>
</dbReference>
<dbReference type="RefSeq" id="XP_054186474.1">
    <property type="nucleotide sequence ID" value="XM_054330499.1"/>
</dbReference>
<dbReference type="RefSeq" id="XP_054186723.1">
    <property type="nucleotide sequence ID" value="XM_054330748.1"/>
</dbReference>
<dbReference type="RefSeq" id="XP_054186724.1">
    <property type="nucleotide sequence ID" value="XM_054330749.1"/>
</dbReference>
<dbReference type="RefSeq" id="XP_054186954.1">
    <property type="nucleotide sequence ID" value="XM_054330979.1"/>
</dbReference>
<dbReference type="RefSeq" id="XP_054186955.1">
    <property type="nucleotide sequence ID" value="XM_054330980.1"/>
</dbReference>
<dbReference type="RefSeq" id="XP_054187237.1">
    <property type="nucleotide sequence ID" value="XM_054331262.1"/>
</dbReference>
<dbReference type="RefSeq" id="XP_054187238.1">
    <property type="nucleotide sequence ID" value="XM_054331263.1"/>
</dbReference>
<dbReference type="RefSeq" id="XP_054187506.1">
    <property type="nucleotide sequence ID" value="XM_054331531.1"/>
</dbReference>
<dbReference type="RefSeq" id="XP_054187507.1">
    <property type="nucleotide sequence ID" value="XM_054331532.1"/>
</dbReference>
<dbReference type="RefSeq" id="XP_054189551.1">
    <property type="nucleotide sequence ID" value="XM_054333576.1"/>
</dbReference>
<dbReference type="RefSeq" id="XP_054189552.1">
    <property type="nucleotide sequence ID" value="XM_054333577.1"/>
</dbReference>
<dbReference type="RefSeq" id="XP_054189653.1">
    <property type="nucleotide sequence ID" value="XM_054333678.1"/>
</dbReference>
<dbReference type="RefSeq" id="XP_054189654.1">
    <property type="nucleotide sequence ID" value="XM_054333679.1"/>
</dbReference>
<dbReference type="PDB" id="6Z9U">
    <property type="method" value="X-ray"/>
    <property type="resolution" value="2.10 A"/>
    <property type="chains" value="A/C=208-310"/>
</dbReference>
<dbReference type="PDB" id="7UXA">
    <property type="method" value="EM"/>
    <property type="resolution" value="3.28 A"/>
    <property type="chains" value="A=1-309"/>
</dbReference>
<dbReference type="PDB" id="7ZRZ">
    <property type="method" value="EM"/>
    <property type="resolution" value="3.09 A"/>
    <property type="chains" value="AP1=1-120, AP1=180-310"/>
</dbReference>
<dbReference type="PDB" id="8HMY">
    <property type="method" value="EM"/>
    <property type="resolution" value="2.94 A"/>
    <property type="chains" value="B=1-310"/>
</dbReference>
<dbReference type="PDB" id="8HMZ">
    <property type="method" value="EM"/>
    <property type="resolution" value="2.90 A"/>
    <property type="chains" value="B=1-310"/>
</dbReference>
<dbReference type="PDB" id="8ISS">
    <property type="method" value="EM"/>
    <property type="resolution" value="3.19 A"/>
    <property type="chains" value="C=1-310"/>
</dbReference>
<dbReference type="PDBsum" id="6Z9U"/>
<dbReference type="PDBsum" id="7UXA"/>
<dbReference type="PDBsum" id="7ZRZ"/>
<dbReference type="PDBsum" id="8HMY"/>
<dbReference type="PDBsum" id="8HMZ"/>
<dbReference type="PDBsum" id="8ISS"/>
<dbReference type="EMDB" id="EMD-14923"/>
<dbReference type="EMDB" id="EMD-26856"/>
<dbReference type="EMDB" id="EMD-34904"/>
<dbReference type="EMDB" id="EMD-34905"/>
<dbReference type="EMDB" id="EMD-35694"/>
<dbReference type="SMR" id="Q9BSV6"/>
<dbReference type="BioGRID" id="122505">
    <property type="interactions" value="42"/>
</dbReference>
<dbReference type="ComplexPortal" id="CPX-2707">
    <property type="entry name" value="tRNA-intron splicing endonuclease complex"/>
</dbReference>
<dbReference type="CORUM" id="Q9BSV6"/>
<dbReference type="FunCoup" id="Q9BSV6">
    <property type="interactions" value="850"/>
</dbReference>
<dbReference type="IntAct" id="Q9BSV6">
    <property type="interactions" value="13"/>
</dbReference>
<dbReference type="STRING" id="9606.ENSP00000397402"/>
<dbReference type="GlyGen" id="Q9BSV6">
    <property type="glycosylation" value="1 site, 1 O-linked glycan (1 site)"/>
</dbReference>
<dbReference type="iPTMnet" id="Q9BSV6"/>
<dbReference type="PhosphoSitePlus" id="Q9BSV6"/>
<dbReference type="BioMuta" id="TSEN34"/>
<dbReference type="DMDM" id="50401668"/>
<dbReference type="jPOST" id="Q9BSV6"/>
<dbReference type="MassIVE" id="Q9BSV6"/>
<dbReference type="PaxDb" id="9606-ENSP00000397402"/>
<dbReference type="PeptideAtlas" id="Q9BSV6"/>
<dbReference type="ProteomicsDB" id="78929"/>
<dbReference type="Pumba" id="Q9BSV6"/>
<dbReference type="Antibodypedia" id="32835">
    <property type="antibodies" value="41 antibodies from 13 providers"/>
</dbReference>
<dbReference type="DNASU" id="79042"/>
<dbReference type="Ensembl" id="ENST00000302937.8">
    <property type="protein sequence ID" value="ENSP00000305524.4"/>
    <property type="gene ID" value="ENSG00000170892.13"/>
</dbReference>
<dbReference type="Ensembl" id="ENST00000396383.5">
    <property type="protein sequence ID" value="ENSP00000379667.1"/>
    <property type="gene ID" value="ENSG00000170892.13"/>
</dbReference>
<dbReference type="Ensembl" id="ENST00000396388.3">
    <property type="protein sequence ID" value="ENSP00000379671.2"/>
    <property type="gene ID" value="ENSG00000170892.13"/>
</dbReference>
<dbReference type="Ensembl" id="ENST00000429671.7">
    <property type="protein sequence ID" value="ENSP00000397402.4"/>
    <property type="gene ID" value="ENSG00000170892.13"/>
</dbReference>
<dbReference type="Ensembl" id="ENST00000455798.6">
    <property type="protein sequence ID" value="ENSP00000400743.2"/>
    <property type="gene ID" value="ENSG00000170892.13"/>
</dbReference>
<dbReference type="Ensembl" id="ENST00000611560.4">
    <property type="protein sequence ID" value="ENSP00000480422.1"/>
    <property type="gene ID" value="ENSG00000274796.4"/>
</dbReference>
<dbReference type="Ensembl" id="ENST00000611798.4">
    <property type="protein sequence ID" value="ENSP00000480899.1"/>
    <property type="gene ID" value="ENSG00000278605.4"/>
</dbReference>
<dbReference type="Ensembl" id="ENST00000612236.4">
    <property type="protein sequence ID" value="ENSP00000480503.1"/>
    <property type="gene ID" value="ENSG00000274129.4"/>
</dbReference>
<dbReference type="Ensembl" id="ENST00000612393.4">
    <property type="protein sequence ID" value="ENSP00000478622.1"/>
    <property type="gene ID" value="ENSG00000278622.4"/>
</dbReference>
<dbReference type="Ensembl" id="ENST00000613310.4">
    <property type="protein sequence ID" value="ENSP00000477766.1"/>
    <property type="gene ID" value="ENSG00000274078.4"/>
</dbReference>
<dbReference type="Ensembl" id="ENST00000613712.4">
    <property type="protein sequence ID" value="ENSP00000484865.1"/>
    <property type="gene ID" value="ENSG00000273896.4"/>
</dbReference>
<dbReference type="Ensembl" id="ENST00000613888.4">
    <property type="protein sequence ID" value="ENSP00000481068.1"/>
    <property type="gene ID" value="ENSG00000278712.4"/>
</dbReference>
<dbReference type="Ensembl" id="ENST00000614948.4">
    <property type="protein sequence ID" value="ENSP00000478156.1"/>
    <property type="gene ID" value="ENSG00000278622.4"/>
</dbReference>
<dbReference type="Ensembl" id="ENST00000614984.1">
    <property type="protein sequence ID" value="ENSP00000483266.1"/>
    <property type="gene ID" value="ENSG00000278712.4"/>
</dbReference>
<dbReference type="Ensembl" id="ENST00000615000.4">
    <property type="protein sequence ID" value="ENSP00000479654.1"/>
    <property type="gene ID" value="ENSG00000278605.4"/>
</dbReference>
<dbReference type="Ensembl" id="ENST00000615079.1">
    <property type="protein sequence ID" value="ENSP00000484694.1"/>
    <property type="gene ID" value="ENSG00000278605.4"/>
</dbReference>
<dbReference type="Ensembl" id="ENST00000615900.1">
    <property type="protein sequence ID" value="ENSP00000484964.1"/>
    <property type="gene ID" value="ENSG00000274078.4"/>
</dbReference>
<dbReference type="Ensembl" id="ENST00000615975.4">
    <property type="protein sequence ID" value="ENSP00000484225.1"/>
    <property type="gene ID" value="ENSG00000278622.4"/>
</dbReference>
<dbReference type="Ensembl" id="ENST00000616063.4">
    <property type="protein sequence ID" value="ENSP00000480964.1"/>
    <property type="gene ID" value="ENSG00000274129.4"/>
</dbReference>
<dbReference type="Ensembl" id="ENST00000616209.1">
    <property type="protein sequence ID" value="ENSP00000481374.1"/>
    <property type="gene ID" value="ENSG00000274672.4"/>
</dbReference>
<dbReference type="Ensembl" id="ENST00000617149.1">
    <property type="protein sequence ID" value="ENSP00000481639.1"/>
    <property type="gene ID" value="ENSG00000273896.4"/>
</dbReference>
<dbReference type="Ensembl" id="ENST00000617902.4">
    <property type="protein sequence ID" value="ENSP00000484465.1"/>
    <property type="gene ID" value="ENSG00000275165.4"/>
</dbReference>
<dbReference type="Ensembl" id="ENST00000618135.4">
    <property type="protein sequence ID" value="ENSP00000479576.1"/>
    <property type="gene ID" value="ENSG00000274129.4"/>
</dbReference>
<dbReference type="Ensembl" id="ENST00000619994.1">
    <property type="protein sequence ID" value="ENSP00000482084.1"/>
    <property type="gene ID" value="ENSG00000275165.4"/>
</dbReference>
<dbReference type="Ensembl" id="ENST00000622524.4">
    <property type="protein sequence ID" value="ENSP00000483436.1"/>
    <property type="gene ID" value="ENSG00000274672.4"/>
</dbReference>
<dbReference type="Ensembl" id="ENST00000622538.1">
    <property type="protein sequence ID" value="ENSP00000482527.1"/>
    <property type="gene ID" value="ENSG00000274796.4"/>
</dbReference>
<dbReference type="GeneID" id="79042"/>
<dbReference type="KEGG" id="hsa:79042"/>
<dbReference type="MANE-Select" id="ENST00000396388.3">
    <property type="protein sequence ID" value="ENSP00000379671.2"/>
    <property type="RefSeq nucleotide sequence ID" value="NM_001077446.4"/>
    <property type="RefSeq protein sequence ID" value="NP_001070914.1"/>
</dbReference>
<dbReference type="UCSC" id="uc032icq.1">
    <property type="organism name" value="human"/>
</dbReference>
<dbReference type="AGR" id="HGNC:15506"/>
<dbReference type="CTD" id="79042"/>
<dbReference type="DisGeNET" id="79042"/>
<dbReference type="GeneCards" id="TSEN34"/>
<dbReference type="HGNC" id="HGNC:15506">
    <property type="gene designation" value="TSEN34"/>
</dbReference>
<dbReference type="HPA" id="ENSG00000170892">
    <property type="expression patterns" value="Low tissue specificity"/>
</dbReference>
<dbReference type="MalaCards" id="TSEN34"/>
<dbReference type="MIM" id="608754">
    <property type="type" value="gene"/>
</dbReference>
<dbReference type="MIM" id="612390">
    <property type="type" value="phenotype"/>
</dbReference>
<dbReference type="neXtProt" id="NX_Q9BSV6"/>
<dbReference type="OpenTargets" id="ENSG00000170892"/>
<dbReference type="Orphanet" id="2524">
    <property type="disease" value="Pontocerebellar hypoplasia type 2"/>
</dbReference>
<dbReference type="PharmGKB" id="PA134871088"/>
<dbReference type="VEuPathDB" id="HostDB:ENSG00000170892"/>
<dbReference type="eggNOG" id="KOG4133">
    <property type="taxonomic scope" value="Eukaryota"/>
</dbReference>
<dbReference type="GeneTree" id="ENSGT00390000003912"/>
<dbReference type="HOGENOM" id="CLU_049366_2_1_1"/>
<dbReference type="InParanoid" id="Q9BSV6"/>
<dbReference type="OMA" id="RTFSLEW"/>
<dbReference type="OrthoDB" id="48041at2759"/>
<dbReference type="PAN-GO" id="Q9BSV6">
    <property type="GO annotations" value="2 GO annotations based on evolutionary models"/>
</dbReference>
<dbReference type="PhylomeDB" id="Q9BSV6"/>
<dbReference type="TreeFam" id="TF314631"/>
<dbReference type="BioCyc" id="MetaCyc:HS10201-MONOMER"/>
<dbReference type="BRENDA" id="4.6.1.16">
    <property type="organism ID" value="2681"/>
</dbReference>
<dbReference type="PathwayCommons" id="Q9BSV6"/>
<dbReference type="Reactome" id="R-HSA-6784531">
    <property type="pathway name" value="tRNA processing in the nucleus"/>
</dbReference>
<dbReference type="SignaLink" id="Q9BSV6"/>
<dbReference type="BioGRID-ORCS" id="79042">
    <property type="hits" value="432 hits in 1158 CRISPR screens"/>
</dbReference>
<dbReference type="GeneWiki" id="TSEN34"/>
<dbReference type="GenomeRNAi" id="79042"/>
<dbReference type="Pharos" id="Q9BSV6">
    <property type="development level" value="Tdark"/>
</dbReference>
<dbReference type="PRO" id="PR:Q9BSV6"/>
<dbReference type="Proteomes" id="UP000005640">
    <property type="component" value="Chromosome 19"/>
</dbReference>
<dbReference type="RNAct" id="Q9BSV6">
    <property type="molecule type" value="protein"/>
</dbReference>
<dbReference type="Bgee" id="ENSG00000170892">
    <property type="expression patterns" value="Expressed in blood and 101 other cell types or tissues"/>
</dbReference>
<dbReference type="ExpressionAtlas" id="Q9BSV6">
    <property type="expression patterns" value="baseline and differential"/>
</dbReference>
<dbReference type="GO" id="GO:0005730">
    <property type="term" value="C:nucleolus"/>
    <property type="evidence" value="ECO:0007669"/>
    <property type="project" value="UniProtKB-SubCell"/>
</dbReference>
<dbReference type="GO" id="GO:0005654">
    <property type="term" value="C:nucleoplasm"/>
    <property type="evidence" value="ECO:0000314"/>
    <property type="project" value="HPA"/>
</dbReference>
<dbReference type="GO" id="GO:0000214">
    <property type="term" value="C:tRNA-intron endonuclease complex"/>
    <property type="evidence" value="ECO:0007669"/>
    <property type="project" value="InterPro"/>
</dbReference>
<dbReference type="GO" id="GO:0016829">
    <property type="term" value="F:lyase activity"/>
    <property type="evidence" value="ECO:0007669"/>
    <property type="project" value="UniProtKB-KW"/>
</dbReference>
<dbReference type="GO" id="GO:0003676">
    <property type="term" value="F:nucleic acid binding"/>
    <property type="evidence" value="ECO:0007669"/>
    <property type="project" value="InterPro"/>
</dbReference>
<dbReference type="GO" id="GO:0000213">
    <property type="term" value="F:tRNA-intron endonuclease activity"/>
    <property type="evidence" value="ECO:0000318"/>
    <property type="project" value="GO_Central"/>
</dbReference>
<dbReference type="GO" id="GO:0006397">
    <property type="term" value="P:mRNA processing"/>
    <property type="evidence" value="ECO:0007669"/>
    <property type="project" value="UniProtKB-KW"/>
</dbReference>
<dbReference type="GO" id="GO:0000379">
    <property type="term" value="P:tRNA-type intron splice site recognition and cleavage"/>
    <property type="evidence" value="ECO:0000318"/>
    <property type="project" value="GO_Central"/>
</dbReference>
<dbReference type="CDD" id="cd22363">
    <property type="entry name" value="tRNA-intron_lyase_C"/>
    <property type="match status" value="1"/>
</dbReference>
<dbReference type="FunFam" id="3.40.1350.10:FF:000002">
    <property type="entry name" value="tRNA-splicing endonuclease subunit Sen34"/>
    <property type="match status" value="1"/>
</dbReference>
<dbReference type="Gene3D" id="3.40.1350.10">
    <property type="match status" value="1"/>
</dbReference>
<dbReference type="InterPro" id="IPR011856">
    <property type="entry name" value="tRNA_endonuc-like_dom_sf"/>
</dbReference>
<dbReference type="InterPro" id="IPR036167">
    <property type="entry name" value="tRNA_intron_Endo_cat-like_sf"/>
</dbReference>
<dbReference type="InterPro" id="IPR006677">
    <property type="entry name" value="tRNA_intron_Endonuc_cat-like"/>
</dbReference>
<dbReference type="InterPro" id="IPR006676">
    <property type="entry name" value="tRNA_splic"/>
</dbReference>
<dbReference type="InterPro" id="IPR016690">
    <property type="entry name" value="tRNA_splic_SEN34"/>
</dbReference>
<dbReference type="NCBIfam" id="TIGR00324">
    <property type="entry name" value="endA"/>
    <property type="match status" value="1"/>
</dbReference>
<dbReference type="PANTHER" id="PTHR13070:SF0">
    <property type="entry name" value="TRNA-SPLICING ENDONUCLEASE SUBUNIT SEN34"/>
    <property type="match status" value="1"/>
</dbReference>
<dbReference type="PANTHER" id="PTHR13070">
    <property type="entry name" value="TRNA-SPLICING ENDONUCLEASE SUBUNIT SEN34-RELATED"/>
    <property type="match status" value="1"/>
</dbReference>
<dbReference type="Pfam" id="PF01974">
    <property type="entry name" value="tRNA_int_endo"/>
    <property type="match status" value="1"/>
</dbReference>
<dbReference type="PIRSF" id="PIRSF017250">
    <property type="entry name" value="tRNA_splic_SEN34"/>
    <property type="match status" value="1"/>
</dbReference>
<dbReference type="SUPFAM" id="SSF53032">
    <property type="entry name" value="tRNA-intron endonuclease catalytic domain-like"/>
    <property type="match status" value="1"/>
</dbReference>